<gene>
    <name type="primary">LST7</name>
    <name type="ordered locus">YGR057C</name>
</gene>
<protein>
    <recommendedName>
        <fullName>Protein LST7</fullName>
    </recommendedName>
    <alternativeName>
        <fullName>Lethal with SEC thirteen protein 7</fullName>
    </alternativeName>
</protein>
<feature type="chain" id="PRO_0000202801" description="Protein LST7">
    <location>
        <begin position="1"/>
        <end position="242"/>
    </location>
</feature>
<feature type="domain" description="uDENN FLCN/SMCR8-type" evidence="1">
    <location>
        <begin position="48"/>
        <end position="212"/>
    </location>
</feature>
<feature type="sequence variant" description="In strain: SK1.">
    <original>T</original>
    <variation>I</variation>
    <location>
        <position position="4"/>
    </location>
</feature>
<sequence>MSSTVISLAHFCDKHGPRIISVTQSAEKGTLGEELLVPDYPTESYCESCLLQFPEESTRSMRCFIEDVPFITTQYSSIRYQLLNSIIKRAFSEETMIYDNMPFIFFDDLRGLNLVIGFKLYDENARGNERRYCFILTVDSRSHDDSMKMLSEHWNFIIGGFDKMIAYIKNIHKSEFLGKNKTVENNLETLNNNAFIGSYLRANKSKFGRNLVSLTDDKFLFVRIHKWNSFLLHTVMNENKLP</sequence>
<evidence type="ECO:0000255" key="1">
    <source>
        <dbReference type="PROSITE-ProRule" id="PRU01178"/>
    </source>
</evidence>
<evidence type="ECO:0000269" key="2">
    <source>
    </source>
</evidence>
<evidence type="ECO:0000269" key="3">
    <source>
    </source>
</evidence>
<evidence type="ECO:0000269" key="4">
    <source>
    </source>
</evidence>
<evidence type="ECO:0000305" key="5"/>
<organism>
    <name type="scientific">Saccharomyces cerevisiae (strain ATCC 204508 / S288c)</name>
    <name type="common">Baker's yeast</name>
    <dbReference type="NCBI Taxonomy" id="559292"/>
    <lineage>
        <taxon>Eukaryota</taxon>
        <taxon>Fungi</taxon>
        <taxon>Dikarya</taxon>
        <taxon>Ascomycota</taxon>
        <taxon>Saccharomycotina</taxon>
        <taxon>Saccharomycetes</taxon>
        <taxon>Saccharomycetales</taxon>
        <taxon>Saccharomycetaceae</taxon>
        <taxon>Saccharomyces</taxon>
    </lineage>
</organism>
<proteinExistence type="evidence at protein level"/>
<reference key="1">
    <citation type="journal article" date="2005" name="Nat. Genet.">
        <title>Quantitative trait loci mapped to single-nucleotide resolution in yeast.</title>
        <authorList>
            <person name="Deutschbauer A.M."/>
            <person name="Davis R.W."/>
        </authorList>
    </citation>
    <scope>NUCLEOTIDE SEQUENCE [GENOMIC DNA]</scope>
    <source>
        <strain>SK1</strain>
    </source>
</reference>
<reference key="2">
    <citation type="journal article" date="1997" name="Nature">
        <title>The nucleotide sequence of Saccharomyces cerevisiae chromosome VII.</title>
        <authorList>
            <person name="Tettelin H."/>
            <person name="Agostoni-Carbone M.L."/>
            <person name="Albermann K."/>
            <person name="Albers M."/>
            <person name="Arroyo J."/>
            <person name="Backes U."/>
            <person name="Barreiros T."/>
            <person name="Bertani I."/>
            <person name="Bjourson A.J."/>
            <person name="Brueckner M."/>
            <person name="Bruschi C.V."/>
            <person name="Carignani G."/>
            <person name="Castagnoli L."/>
            <person name="Cerdan E."/>
            <person name="Clemente M.L."/>
            <person name="Coblenz A."/>
            <person name="Coglievina M."/>
            <person name="Coissac E."/>
            <person name="Defoor E."/>
            <person name="Del Bino S."/>
            <person name="Delius H."/>
            <person name="Delneri D."/>
            <person name="de Wergifosse P."/>
            <person name="Dujon B."/>
            <person name="Durand P."/>
            <person name="Entian K.-D."/>
            <person name="Eraso P."/>
            <person name="Escribano V."/>
            <person name="Fabiani L."/>
            <person name="Fartmann B."/>
            <person name="Feroli F."/>
            <person name="Feuermann M."/>
            <person name="Frontali L."/>
            <person name="Garcia-Gonzalez M."/>
            <person name="Garcia-Saez M.I."/>
            <person name="Goffeau A."/>
            <person name="Guerreiro P."/>
            <person name="Hani J."/>
            <person name="Hansen M."/>
            <person name="Hebling U."/>
            <person name="Hernandez K."/>
            <person name="Heumann K."/>
            <person name="Hilger F."/>
            <person name="Hofmann B."/>
            <person name="Indge K.J."/>
            <person name="James C.M."/>
            <person name="Klima R."/>
            <person name="Koetter P."/>
            <person name="Kramer B."/>
            <person name="Kramer W."/>
            <person name="Lauquin G."/>
            <person name="Leuther H."/>
            <person name="Louis E.J."/>
            <person name="Maillier E."/>
            <person name="Marconi A."/>
            <person name="Martegani E."/>
            <person name="Mazon M.J."/>
            <person name="Mazzoni C."/>
            <person name="McReynolds A.D.K."/>
            <person name="Melchioretto P."/>
            <person name="Mewes H.-W."/>
            <person name="Minenkova O."/>
            <person name="Mueller-Auer S."/>
            <person name="Nawrocki A."/>
            <person name="Netter P."/>
            <person name="Neu R."/>
            <person name="Nombela C."/>
            <person name="Oliver S.G."/>
            <person name="Panzeri L."/>
            <person name="Paoluzi S."/>
            <person name="Plevani P."/>
            <person name="Portetelle D."/>
            <person name="Portillo F."/>
            <person name="Potier S."/>
            <person name="Purnelle B."/>
            <person name="Rieger M."/>
            <person name="Riles L."/>
            <person name="Rinaldi T."/>
            <person name="Robben J."/>
            <person name="Rodrigues-Pousada C."/>
            <person name="Rodriguez-Belmonte E."/>
            <person name="Rodriguez-Torres A.M."/>
            <person name="Rose M."/>
            <person name="Ruzzi M."/>
            <person name="Saliola M."/>
            <person name="Sanchez-Perez M."/>
            <person name="Schaefer B."/>
            <person name="Schaefer M."/>
            <person name="Scharfe M."/>
            <person name="Schmidheini T."/>
            <person name="Schreer A."/>
            <person name="Skala J."/>
            <person name="Souciet J.-L."/>
            <person name="Steensma H.Y."/>
            <person name="Talla E."/>
            <person name="Thierry A."/>
            <person name="Vandenbol M."/>
            <person name="van der Aart Q.J.M."/>
            <person name="Van Dyck L."/>
            <person name="Vanoni M."/>
            <person name="Verhasselt P."/>
            <person name="Voet M."/>
            <person name="Volckaert G."/>
            <person name="Wambutt R."/>
            <person name="Watson M.D."/>
            <person name="Weber N."/>
            <person name="Wedler E."/>
            <person name="Wedler H."/>
            <person name="Wipfli P."/>
            <person name="Wolf K."/>
            <person name="Wright L.F."/>
            <person name="Zaccaria P."/>
            <person name="Zimmermann M."/>
            <person name="Zollner A."/>
            <person name="Kleine K."/>
        </authorList>
    </citation>
    <scope>NUCLEOTIDE SEQUENCE [LARGE SCALE GENOMIC DNA]</scope>
    <source>
        <strain>ATCC 204508 / S288c</strain>
    </source>
</reference>
<reference key="3">
    <citation type="journal article" date="2014" name="G3 (Bethesda)">
        <title>The reference genome sequence of Saccharomyces cerevisiae: Then and now.</title>
        <authorList>
            <person name="Engel S.R."/>
            <person name="Dietrich F.S."/>
            <person name="Fisk D.G."/>
            <person name="Binkley G."/>
            <person name="Balakrishnan R."/>
            <person name="Costanzo M.C."/>
            <person name="Dwight S.S."/>
            <person name="Hitz B.C."/>
            <person name="Karra K."/>
            <person name="Nash R.S."/>
            <person name="Weng S."/>
            <person name="Wong E.D."/>
            <person name="Lloyd P."/>
            <person name="Skrzypek M.S."/>
            <person name="Miyasato S.R."/>
            <person name="Simison M."/>
            <person name="Cherry J.M."/>
        </authorList>
    </citation>
    <scope>GENOME REANNOTATION</scope>
    <source>
        <strain>ATCC 204508 / S288c</strain>
    </source>
</reference>
<reference key="4">
    <citation type="journal article" date="1997" name="Genetics">
        <title>Control of amino acid permease sorting in the late secretory pathway of Saccharomyces cerevisiae by SEC13, LST4, LST7 and LST8.</title>
        <authorList>
            <person name="Roberg K.J."/>
            <person name="Bickel S."/>
            <person name="Rowley N."/>
            <person name="Kaiser C.A."/>
        </authorList>
    </citation>
    <scope>FUNCTION</scope>
</reference>
<reference key="5">
    <citation type="journal article" date="2003" name="Nature">
        <title>Sequencing and comparison of yeast species to identify genes and regulatory elements.</title>
        <authorList>
            <person name="Kellis M."/>
            <person name="Patterson N."/>
            <person name="Endrizzi M."/>
            <person name="Birren B.W."/>
            <person name="Lander E.S."/>
        </authorList>
    </citation>
    <scope>IDENTIFICATION OF PROBABLE INITIATION SITE</scope>
</reference>
<reference key="6">
    <citation type="journal article" date="2003" name="Nature">
        <title>Global analysis of protein expression in yeast.</title>
        <authorList>
            <person name="Ghaemmaghami S."/>
            <person name="Huh W.-K."/>
            <person name="Bower K."/>
            <person name="Howson R.W."/>
            <person name="Belle A."/>
            <person name="Dephoure N."/>
            <person name="O'Shea E.K."/>
            <person name="Weissman J.S."/>
        </authorList>
    </citation>
    <scope>LEVEL OF PROTEIN EXPRESSION [LARGE SCALE ANALYSIS]</scope>
</reference>
<reference key="7">
    <citation type="journal article" date="2020" name="J. Cell Sci.">
        <title>Amino acid homeostatic control by TORC1 in Saccharomyces cerevisiae under high hydrostatic pressure.</title>
        <authorList>
            <person name="Uemura S."/>
            <person name="Mochizuki T."/>
            <person name="Amemiya K."/>
            <person name="Kurosaka G."/>
            <person name="Yazawa M."/>
            <person name="Nakamoto K."/>
            <person name="Ishikawa Y."/>
            <person name="Izawa S."/>
            <person name="Abe F."/>
        </authorList>
    </citation>
    <scope>DISRUPTION PHENOTYPE</scope>
</reference>
<dbReference type="EMBL" id="DQ115391">
    <property type="protein sequence ID" value="AAZ22470.1"/>
    <property type="molecule type" value="Genomic_DNA"/>
</dbReference>
<dbReference type="EMBL" id="Z72842">
    <property type="protein sequence ID" value="CAA97058.1"/>
    <property type="status" value="ALT_INIT"/>
    <property type="molecule type" value="Genomic_DNA"/>
</dbReference>
<dbReference type="EMBL" id="Z72843">
    <property type="protein sequence ID" value="CAA97060.1"/>
    <property type="status" value="ALT_INIT"/>
    <property type="molecule type" value="Genomic_DNA"/>
</dbReference>
<dbReference type="EMBL" id="BK006941">
    <property type="protein sequence ID" value="DAA08153.1"/>
    <property type="molecule type" value="Genomic_DNA"/>
</dbReference>
<dbReference type="PIR" id="S64351">
    <property type="entry name" value="S64351"/>
</dbReference>
<dbReference type="RefSeq" id="NP_011571.4">
    <property type="nucleotide sequence ID" value="NM_001181186.3"/>
</dbReference>
<dbReference type="SMR" id="P53237"/>
<dbReference type="BioGRID" id="33302">
    <property type="interactions" value="162"/>
</dbReference>
<dbReference type="DIP" id="DIP-1424N"/>
<dbReference type="FunCoup" id="P53237">
    <property type="interactions" value="21"/>
</dbReference>
<dbReference type="IntAct" id="P53237">
    <property type="interactions" value="3"/>
</dbReference>
<dbReference type="MINT" id="P53237"/>
<dbReference type="STRING" id="4932.YGR057C"/>
<dbReference type="PaxDb" id="4932-YGR057C"/>
<dbReference type="PeptideAtlas" id="P53237"/>
<dbReference type="EnsemblFungi" id="YGR057C_mRNA">
    <property type="protein sequence ID" value="YGR057C"/>
    <property type="gene ID" value="YGR057C"/>
</dbReference>
<dbReference type="GeneID" id="852948"/>
<dbReference type="KEGG" id="sce:YGR057C"/>
<dbReference type="AGR" id="SGD:S000003289"/>
<dbReference type="SGD" id="S000003289">
    <property type="gene designation" value="LST7"/>
</dbReference>
<dbReference type="VEuPathDB" id="FungiDB:YGR057C"/>
<dbReference type="eggNOG" id="KOG3715">
    <property type="taxonomic scope" value="Eukaryota"/>
</dbReference>
<dbReference type="GeneTree" id="ENSGT00390000009864"/>
<dbReference type="HOGENOM" id="CLU_035854_1_0_1"/>
<dbReference type="InParanoid" id="P53237"/>
<dbReference type="OMA" id="THFCDKH"/>
<dbReference type="OrthoDB" id="5599713at2759"/>
<dbReference type="BioCyc" id="YEAST:G3O-30774-MONOMER"/>
<dbReference type="BioGRID-ORCS" id="852948">
    <property type="hits" value="0 hits in 10 CRISPR screens"/>
</dbReference>
<dbReference type="PRO" id="PR:P53237"/>
<dbReference type="Proteomes" id="UP000002311">
    <property type="component" value="Chromosome VII"/>
</dbReference>
<dbReference type="RNAct" id="P53237">
    <property type="molecule type" value="protein"/>
</dbReference>
<dbReference type="GO" id="GO:0005737">
    <property type="term" value="C:cytoplasm"/>
    <property type="evidence" value="ECO:0000314"/>
    <property type="project" value="SGD"/>
</dbReference>
<dbReference type="GO" id="GO:0005829">
    <property type="term" value="C:cytosol"/>
    <property type="evidence" value="ECO:0007005"/>
    <property type="project" value="SGD"/>
</dbReference>
<dbReference type="GO" id="GO:1990877">
    <property type="term" value="C:FNIP-folliculin RagC/D GAP"/>
    <property type="evidence" value="ECO:0000314"/>
    <property type="project" value="SGD"/>
</dbReference>
<dbReference type="GO" id="GO:0005774">
    <property type="term" value="C:vacuolar membrane"/>
    <property type="evidence" value="ECO:0000314"/>
    <property type="project" value="SGD"/>
</dbReference>
<dbReference type="GO" id="GO:0005096">
    <property type="term" value="F:GTPase activator activity"/>
    <property type="evidence" value="ECO:0007669"/>
    <property type="project" value="InterPro"/>
</dbReference>
<dbReference type="GO" id="GO:0071230">
    <property type="term" value="P:cellular response to amino acid stimulus"/>
    <property type="evidence" value="ECO:0000315"/>
    <property type="project" value="SGD"/>
</dbReference>
<dbReference type="GO" id="GO:1904263">
    <property type="term" value="P:positive regulation of TORC1 signaling"/>
    <property type="evidence" value="ECO:0000315"/>
    <property type="project" value="SGD"/>
</dbReference>
<dbReference type="InterPro" id="IPR037521">
    <property type="entry name" value="FLCN/SMCR8_DENN"/>
</dbReference>
<dbReference type="InterPro" id="IPR021713">
    <property type="entry name" value="Folliculin"/>
</dbReference>
<dbReference type="InterPro" id="IPR037520">
    <property type="entry name" value="Folliculin/SMCR8_longin"/>
</dbReference>
<dbReference type="PANTHER" id="PTHR31441:SF2">
    <property type="entry name" value="FOLLICULIN"/>
    <property type="match status" value="1"/>
</dbReference>
<dbReference type="PANTHER" id="PTHR31441">
    <property type="entry name" value="FOLLICULIN FAMILY MEMBER"/>
    <property type="match status" value="1"/>
</dbReference>
<dbReference type="Pfam" id="PF11704">
    <property type="entry name" value="Folliculin"/>
    <property type="match status" value="1"/>
</dbReference>
<dbReference type="PROSITE" id="PS51834">
    <property type="entry name" value="DENN_FLCN_SMCR8"/>
    <property type="match status" value="1"/>
</dbReference>
<accession>P53237</accession>
<accession>D6VUJ2</accession>
<accession>Q45U29</accession>
<comment type="function">
    <text evidence="4">Required for the nitrogen-regulated transport of amino acid permeases GAP1 and PUT4 from the Golgi to the cell surface.</text>
</comment>
<comment type="disruption phenotype">
    <text evidence="3">Sensitive to high hydrostatic pressure (mechanical stress).</text>
</comment>
<comment type="miscellaneous">
    <text evidence="2">Present with 656 molecules/cell in log phase SD medium.</text>
</comment>
<comment type="sequence caution" evidence="5">
    <conflict type="erroneous initiation">
        <sequence resource="EMBL-CDS" id="CAA97058"/>
    </conflict>
</comment>
<comment type="sequence caution" evidence="5">
    <conflict type="erroneous initiation">
        <sequence resource="EMBL-CDS" id="CAA97060"/>
    </conflict>
</comment>
<keyword id="KW-1185">Reference proteome</keyword>
<name>LST7_YEAST</name>